<organism>
    <name type="scientific">Methanosarcina mazei (strain ATCC BAA-159 / DSM 3647 / Goe1 / Go1 / JCM 11833 / OCM 88)</name>
    <name type="common">Methanosarcina frisia</name>
    <dbReference type="NCBI Taxonomy" id="192952"/>
    <lineage>
        <taxon>Archaea</taxon>
        <taxon>Methanobacteriati</taxon>
        <taxon>Methanobacteriota</taxon>
        <taxon>Stenosarchaea group</taxon>
        <taxon>Methanomicrobia</taxon>
        <taxon>Methanosarcinales</taxon>
        <taxon>Methanosarcinaceae</taxon>
        <taxon>Methanosarcina</taxon>
    </lineage>
</organism>
<gene>
    <name evidence="1" type="primary">priL</name>
    <name type="synonym">priB</name>
    <name type="ordered locus">MM_1396</name>
</gene>
<accession>Q8PX26</accession>
<proteinExistence type="inferred from homology"/>
<name>PRIL_METMA</name>
<reference key="1">
    <citation type="journal article" date="2002" name="J. Mol. Microbiol. Biotechnol.">
        <title>The genome of Methanosarcina mazei: evidence for lateral gene transfer between Bacteria and Archaea.</title>
        <authorList>
            <person name="Deppenmeier U."/>
            <person name="Johann A."/>
            <person name="Hartsch T."/>
            <person name="Merkl R."/>
            <person name="Schmitz R.A."/>
            <person name="Martinez-Arias R."/>
            <person name="Henne A."/>
            <person name="Wiezer A."/>
            <person name="Baeumer S."/>
            <person name="Jacobi C."/>
            <person name="Brueggemann H."/>
            <person name="Lienard T."/>
            <person name="Christmann A."/>
            <person name="Boemecke M."/>
            <person name="Steckel S."/>
            <person name="Bhattacharyya A."/>
            <person name="Lykidis A."/>
            <person name="Overbeek R."/>
            <person name="Klenk H.-P."/>
            <person name="Gunsalus R.P."/>
            <person name="Fritz H.-J."/>
            <person name="Gottschalk G."/>
        </authorList>
    </citation>
    <scope>NUCLEOTIDE SEQUENCE [LARGE SCALE GENOMIC DNA]</scope>
    <source>
        <strain>ATCC BAA-159 / DSM 3647 / Goe1 / Go1 / JCM 11833 / OCM 88</strain>
    </source>
</reference>
<protein>
    <recommendedName>
        <fullName evidence="1">DNA primase large subunit PriL</fullName>
    </recommendedName>
</protein>
<keyword id="KW-0004">4Fe-4S</keyword>
<keyword id="KW-0235">DNA replication</keyword>
<keyword id="KW-0408">Iron</keyword>
<keyword id="KW-0411">Iron-sulfur</keyword>
<keyword id="KW-0479">Metal-binding</keyword>
<keyword id="KW-0639">Primosome</keyword>
<feature type="chain" id="PRO_0000046782" description="DNA primase large subunit PriL">
    <location>
        <begin position="1"/>
        <end position="370"/>
    </location>
</feature>
<feature type="region of interest" description="Disordered" evidence="2">
    <location>
        <begin position="337"/>
        <end position="370"/>
    </location>
</feature>
<feature type="binding site" evidence="1">
    <location>
        <position position="230"/>
    </location>
    <ligand>
        <name>[4Fe-4S] cluster</name>
        <dbReference type="ChEBI" id="CHEBI:49883"/>
    </ligand>
</feature>
<feature type="binding site" evidence="1">
    <location>
        <position position="301"/>
    </location>
    <ligand>
        <name>[4Fe-4S] cluster</name>
        <dbReference type="ChEBI" id="CHEBI:49883"/>
    </ligand>
</feature>
<feature type="binding site" evidence="1">
    <location>
        <position position="310"/>
    </location>
    <ligand>
        <name>[4Fe-4S] cluster</name>
        <dbReference type="ChEBI" id="CHEBI:49883"/>
    </ligand>
</feature>
<feature type="binding site" evidence="1">
    <location>
        <position position="317"/>
    </location>
    <ligand>
        <name>[4Fe-4S] cluster</name>
        <dbReference type="ChEBI" id="CHEBI:49883"/>
    </ligand>
</feature>
<evidence type="ECO:0000255" key="1">
    <source>
        <dbReference type="HAMAP-Rule" id="MF_00701"/>
    </source>
</evidence>
<evidence type="ECO:0000256" key="2">
    <source>
        <dbReference type="SAM" id="MobiDB-lite"/>
    </source>
</evidence>
<dbReference type="EMBL" id="AE008384">
    <property type="protein sequence ID" value="AAM31092.1"/>
    <property type="molecule type" value="Genomic_DNA"/>
</dbReference>
<dbReference type="RefSeq" id="WP_011033342.1">
    <property type="nucleotide sequence ID" value="NC_003901.1"/>
</dbReference>
<dbReference type="GeneID" id="82160440"/>
<dbReference type="KEGG" id="mma:MM_1396"/>
<dbReference type="PATRIC" id="fig|192952.21.peg.1618"/>
<dbReference type="eggNOG" id="arCOG03013">
    <property type="taxonomic scope" value="Archaea"/>
</dbReference>
<dbReference type="HOGENOM" id="CLU_052778_0_0_2"/>
<dbReference type="Proteomes" id="UP000000595">
    <property type="component" value="Chromosome"/>
</dbReference>
<dbReference type="GO" id="GO:1990077">
    <property type="term" value="C:primosome complex"/>
    <property type="evidence" value="ECO:0007669"/>
    <property type="project" value="UniProtKB-KW"/>
</dbReference>
<dbReference type="GO" id="GO:0051539">
    <property type="term" value="F:4 iron, 4 sulfur cluster binding"/>
    <property type="evidence" value="ECO:0007669"/>
    <property type="project" value="UniProtKB-UniRule"/>
</dbReference>
<dbReference type="GO" id="GO:0003899">
    <property type="term" value="F:DNA-directed RNA polymerase activity"/>
    <property type="evidence" value="ECO:0007669"/>
    <property type="project" value="InterPro"/>
</dbReference>
<dbReference type="GO" id="GO:0046872">
    <property type="term" value="F:metal ion binding"/>
    <property type="evidence" value="ECO:0007669"/>
    <property type="project" value="UniProtKB-KW"/>
</dbReference>
<dbReference type="GO" id="GO:0006270">
    <property type="term" value="P:DNA replication initiation"/>
    <property type="evidence" value="ECO:0007669"/>
    <property type="project" value="TreeGrafter"/>
</dbReference>
<dbReference type="GO" id="GO:0006269">
    <property type="term" value="P:DNA replication, synthesis of primer"/>
    <property type="evidence" value="ECO:0007669"/>
    <property type="project" value="UniProtKB-UniRule"/>
</dbReference>
<dbReference type="CDD" id="cd06560">
    <property type="entry name" value="PriL"/>
    <property type="match status" value="1"/>
</dbReference>
<dbReference type="HAMAP" id="MF_00701">
    <property type="entry name" value="DNA_primase_lrg_arc"/>
    <property type="match status" value="1"/>
</dbReference>
<dbReference type="InterPro" id="IPR007238">
    <property type="entry name" value="DNA_primase_lsu_euk/arc"/>
</dbReference>
<dbReference type="InterPro" id="IPR023642">
    <property type="entry name" value="DNA_primase_lsu_PriL"/>
</dbReference>
<dbReference type="NCBIfam" id="NF002588">
    <property type="entry name" value="PRK02249.1-2"/>
    <property type="match status" value="1"/>
</dbReference>
<dbReference type="PANTHER" id="PTHR10537">
    <property type="entry name" value="DNA PRIMASE LARGE SUBUNIT"/>
    <property type="match status" value="1"/>
</dbReference>
<dbReference type="PANTHER" id="PTHR10537:SF3">
    <property type="entry name" value="DNA PRIMASE LARGE SUBUNIT"/>
    <property type="match status" value="1"/>
</dbReference>
<dbReference type="Pfam" id="PF04104">
    <property type="entry name" value="DNA_primase_lrg"/>
    <property type="match status" value="1"/>
</dbReference>
<dbReference type="SUPFAM" id="SSF140914">
    <property type="entry name" value="PriB N-terminal domain-like"/>
    <property type="match status" value="1"/>
</dbReference>
<sequence length="370" mass="41698">MQAEKLAYYPFTSEASAYVGNLGISLESLLNSRAYRAARARGIERVKEALEGEIKKSPVSGEAQVLSELLSYPFARMLVACVDDQLFTRRYALAEAKAAYTFLRNENPDFLLEFGDDFGISADSQDSYFSMHFTDYIRFSNSLKDPSWKLTNRQLRAGKIKITKEEFSRLLEEAVRERIEQSFPVPEIPPEVSSFCSPYAAEIKDKFEVQKKKFGSTDFGAVKPELFPPCIAYALANVQGGVNLAHSMRFAMTSFLLNVGMSVDEILNLFNISPDFNAEKTLYQIEHIAGATGNTYKPPACDTMRTYGNCVGKDRLCEKISHPLGYYEKKVFIKNKEGEEAQGKEQGKEKDDGKEKENGKESEVKKKKEK</sequence>
<comment type="function">
    <text evidence="1">Regulatory subunit of DNA primase, an RNA polymerase that catalyzes the synthesis of short RNA molecules used as primers for DNA polymerase during DNA replication. Stabilizes and modulates the activity of the small subunit, increasing the rate of DNA synthesis, and conferring RNA synthesis capability. The DNA polymerase activity may enable DNA primase to also catalyze primer extension after primer synthesis. May also play a role in DNA repair.</text>
</comment>
<comment type="cofactor">
    <cofactor evidence="1">
        <name>[4Fe-4S] cluster</name>
        <dbReference type="ChEBI" id="CHEBI:49883"/>
    </cofactor>
    <text evidence="1">Binds 1 [4Fe-4S] cluster.</text>
</comment>
<comment type="subunit">
    <text evidence="1">Heterodimer of a small subunit (PriS) and a large subunit (PriL).</text>
</comment>
<comment type="similarity">
    <text evidence="1">Belongs to the eukaryotic-type primase large subunit family.</text>
</comment>